<dbReference type="EC" id="4.2.2.n1" evidence="1"/>
<dbReference type="EMBL" id="CP000036">
    <property type="protein sequence ID" value="ABB67129.1"/>
    <property type="status" value="ALT_INIT"/>
    <property type="molecule type" value="Genomic_DNA"/>
</dbReference>
<dbReference type="RefSeq" id="WP_000734184.1">
    <property type="nucleotide sequence ID" value="NC_007613.1"/>
</dbReference>
<dbReference type="SMR" id="Q31XS9"/>
<dbReference type="CAZy" id="GH23">
    <property type="family name" value="Glycoside Hydrolase Family 23"/>
</dbReference>
<dbReference type="KEGG" id="sbo:SBO_2586"/>
<dbReference type="HOGENOM" id="CLU_027494_0_1_6"/>
<dbReference type="Proteomes" id="UP000007067">
    <property type="component" value="Chromosome"/>
</dbReference>
<dbReference type="GO" id="GO:0009279">
    <property type="term" value="C:cell outer membrane"/>
    <property type="evidence" value="ECO:0007669"/>
    <property type="project" value="UniProtKB-SubCell"/>
</dbReference>
<dbReference type="GO" id="GO:0008933">
    <property type="term" value="F:peptidoglycan lytic transglycosylase activity"/>
    <property type="evidence" value="ECO:0007669"/>
    <property type="project" value="UniProtKB-UniRule"/>
</dbReference>
<dbReference type="GO" id="GO:0016998">
    <property type="term" value="P:cell wall macromolecule catabolic process"/>
    <property type="evidence" value="ECO:0007669"/>
    <property type="project" value="UniProtKB-UniRule"/>
</dbReference>
<dbReference type="GO" id="GO:0071555">
    <property type="term" value="P:cell wall organization"/>
    <property type="evidence" value="ECO:0007669"/>
    <property type="project" value="UniProtKB-KW"/>
</dbReference>
<dbReference type="GO" id="GO:0009253">
    <property type="term" value="P:peptidoglycan catabolic process"/>
    <property type="evidence" value="ECO:0007669"/>
    <property type="project" value="TreeGrafter"/>
</dbReference>
<dbReference type="CDD" id="cd13403">
    <property type="entry name" value="MLTF-like"/>
    <property type="match status" value="1"/>
</dbReference>
<dbReference type="CDD" id="cd01009">
    <property type="entry name" value="PBP2_YfhD_N"/>
    <property type="match status" value="1"/>
</dbReference>
<dbReference type="FunFam" id="1.10.530.10:FF:000003">
    <property type="entry name" value="Membrane-bound lytic murein transglycosylase F"/>
    <property type="match status" value="1"/>
</dbReference>
<dbReference type="FunFam" id="3.40.190.10:FF:000051">
    <property type="entry name" value="Membrane-bound lytic murein transglycosylase F"/>
    <property type="match status" value="1"/>
</dbReference>
<dbReference type="Gene3D" id="1.10.530.10">
    <property type="match status" value="1"/>
</dbReference>
<dbReference type="Gene3D" id="3.40.190.10">
    <property type="entry name" value="Periplasmic binding protein-like II"/>
    <property type="match status" value="2"/>
</dbReference>
<dbReference type="HAMAP" id="MF_02016">
    <property type="entry name" value="MltF"/>
    <property type="match status" value="1"/>
</dbReference>
<dbReference type="InterPro" id="IPR023346">
    <property type="entry name" value="Lysozyme-like_dom_sf"/>
</dbReference>
<dbReference type="InterPro" id="IPR023703">
    <property type="entry name" value="MltF"/>
</dbReference>
<dbReference type="InterPro" id="IPR001638">
    <property type="entry name" value="Solute-binding_3/MltF_N"/>
</dbReference>
<dbReference type="InterPro" id="IPR000189">
    <property type="entry name" value="Transglyc_AS"/>
</dbReference>
<dbReference type="InterPro" id="IPR008258">
    <property type="entry name" value="Transglycosylase_SLT_dom_1"/>
</dbReference>
<dbReference type="NCBIfam" id="NF008112">
    <property type="entry name" value="PRK10859.1"/>
    <property type="match status" value="1"/>
</dbReference>
<dbReference type="PANTHER" id="PTHR35936">
    <property type="entry name" value="MEMBRANE-BOUND LYTIC MUREIN TRANSGLYCOSYLASE F"/>
    <property type="match status" value="1"/>
</dbReference>
<dbReference type="PANTHER" id="PTHR35936:SF32">
    <property type="entry name" value="MEMBRANE-BOUND LYTIC MUREIN TRANSGLYCOSYLASE F"/>
    <property type="match status" value="1"/>
</dbReference>
<dbReference type="Pfam" id="PF00497">
    <property type="entry name" value="SBP_bac_3"/>
    <property type="match status" value="1"/>
</dbReference>
<dbReference type="Pfam" id="PF01464">
    <property type="entry name" value="SLT"/>
    <property type="match status" value="1"/>
</dbReference>
<dbReference type="SMART" id="SM00062">
    <property type="entry name" value="PBPb"/>
    <property type="match status" value="1"/>
</dbReference>
<dbReference type="SUPFAM" id="SSF53955">
    <property type="entry name" value="Lysozyme-like"/>
    <property type="match status" value="1"/>
</dbReference>
<dbReference type="SUPFAM" id="SSF53850">
    <property type="entry name" value="Periplasmic binding protein-like II"/>
    <property type="match status" value="1"/>
</dbReference>
<dbReference type="PROSITE" id="PS00922">
    <property type="entry name" value="TRANSGLYCOSYLASE"/>
    <property type="match status" value="1"/>
</dbReference>
<accession>Q31XS9</accession>
<comment type="function">
    <text evidence="1">Murein-degrading enzyme that degrades murein glycan strands and insoluble, high-molecular weight murein sacculi, with the concomitant formation of a 1,6-anhydromuramoyl product. Lytic transglycosylases (LTs) play an integral role in the metabolism of the peptidoglycan (PG) sacculus. Their lytic action creates space within the PG sacculus to allow for its expansion as well as for the insertion of various structures such as secretion systems and flagella.</text>
</comment>
<comment type="catalytic activity">
    <reaction evidence="1">
        <text>Exolytic cleavage of the (1-&gt;4)-beta-glycosidic linkage between N-acetylmuramic acid (MurNAc) and N-acetylglucosamine (GlcNAc) residues in peptidoglycan, from either the reducing or the non-reducing ends of the peptidoglycan chains, with concomitant formation of a 1,6-anhydrobond in the MurNAc residue.</text>
        <dbReference type="EC" id="4.2.2.n1"/>
    </reaction>
</comment>
<comment type="subcellular location">
    <subcellularLocation>
        <location>Cell outer membrane</location>
        <topology>Peripheral membrane protein</topology>
    </subcellularLocation>
    <text evidence="1">Attached to the inner leaflet of the outer membrane.</text>
</comment>
<comment type="domain">
    <text evidence="1">The N-terminal domain does not have lytic activity and probably modulates enzymatic activity. The C-terminal domain is the catalytic active domain.</text>
</comment>
<comment type="similarity">
    <text evidence="1">In the N-terminal section; belongs to the bacterial solute-binding protein 3 family.</text>
</comment>
<comment type="similarity">
    <text evidence="1">In the C-terminal section; belongs to the transglycosylase Slt family.</text>
</comment>
<comment type="sequence caution" evidence="2">
    <conflict type="erroneous initiation">
        <sequence resource="EMBL-CDS" id="ABB67129"/>
    </conflict>
</comment>
<evidence type="ECO:0000255" key="1">
    <source>
        <dbReference type="HAMAP-Rule" id="MF_02016"/>
    </source>
</evidence>
<evidence type="ECO:0000305" key="2"/>
<organism>
    <name type="scientific">Shigella boydii serotype 4 (strain Sb227)</name>
    <dbReference type="NCBI Taxonomy" id="300268"/>
    <lineage>
        <taxon>Bacteria</taxon>
        <taxon>Pseudomonadati</taxon>
        <taxon>Pseudomonadota</taxon>
        <taxon>Gammaproteobacteria</taxon>
        <taxon>Enterobacterales</taxon>
        <taxon>Enterobacteriaceae</taxon>
        <taxon>Shigella</taxon>
    </lineage>
</organism>
<name>MLTF_SHIBS</name>
<reference key="1">
    <citation type="journal article" date="2005" name="Nucleic Acids Res.">
        <title>Genome dynamics and diversity of Shigella species, the etiologic agents of bacillary dysentery.</title>
        <authorList>
            <person name="Yang F."/>
            <person name="Yang J."/>
            <person name="Zhang X."/>
            <person name="Chen L."/>
            <person name="Jiang Y."/>
            <person name="Yan Y."/>
            <person name="Tang X."/>
            <person name="Wang J."/>
            <person name="Xiong Z."/>
            <person name="Dong J."/>
            <person name="Xue Y."/>
            <person name="Zhu Y."/>
            <person name="Xu X."/>
            <person name="Sun L."/>
            <person name="Chen S."/>
            <person name="Nie H."/>
            <person name="Peng J."/>
            <person name="Xu J."/>
            <person name="Wang Y."/>
            <person name="Yuan Z."/>
            <person name="Wen Y."/>
            <person name="Yao Z."/>
            <person name="Shen Y."/>
            <person name="Qiang B."/>
            <person name="Hou Y."/>
            <person name="Yu J."/>
            <person name="Jin Q."/>
        </authorList>
    </citation>
    <scope>NUCLEOTIDE SEQUENCE [LARGE SCALE GENOMIC DNA]</scope>
    <source>
        <strain>Sb227</strain>
    </source>
</reference>
<feature type="signal peptide" evidence="1">
    <location>
        <begin position="1"/>
        <end position="21"/>
    </location>
</feature>
<feature type="chain" id="PRO_0000353983" description="Membrane-bound lytic murein transglycosylase F">
    <location>
        <begin position="22"/>
        <end position="518"/>
    </location>
</feature>
<feature type="region of interest" description="Non-LT domain" evidence="1">
    <location>
        <begin position="22"/>
        <end position="269"/>
    </location>
</feature>
<feature type="region of interest" description="LT domain" evidence="1">
    <location>
        <begin position="270"/>
        <end position="518"/>
    </location>
</feature>
<feature type="active site" evidence="1">
    <location>
        <position position="314"/>
    </location>
</feature>
<sequence length="518" mass="58348">MKKLKINYLFIGILALLLAVALWPSIPWFGKADNRIAAIQARGELRVSTIHTPLTYNEINGKPFGLDYELAKQFADYLGVKLKVTVRQNISQLFDDLDNGNADLLAAGLVYNSERVKNYQPGPTYYSVSQQLVYKVGQYRPRTLCNLTAEQLTVAPGHVVVNDLQTLKETKFPELSWKVDDKKGSAELMEDVIEGKLDYTIADSVAISLFQRVHPELAVALDITDEQPVTWFSPLDGDNTLSAALLDFFNEMNEDGTLARIEEKYLGHGDDFDYVDTRTFLRAVDAVLPQLKPLFEKYAEEIDWRLLAAIAYQESHWDAQATSPTGVRGMMMLTKNTAQSLGITDRTDAEQSISGGVRYLQDMMSKVPESVPENERIWFALAAYNMGYAHMLDARALTAKTKGNPDSWADVKQRLPLLSQKPYYSKLTYGYARGHEAYAYVENIRKYQISLVGYLQEKEKQATEAAMQLAQDYPAVSPTELGKEKFPFLSFLSQSSSNYLTHSPSLLFSRKGSEEKQN</sequence>
<proteinExistence type="inferred from homology"/>
<keyword id="KW-0998">Cell outer membrane</keyword>
<keyword id="KW-0961">Cell wall biogenesis/degradation</keyword>
<keyword id="KW-0456">Lyase</keyword>
<keyword id="KW-0472">Membrane</keyword>
<keyword id="KW-0732">Signal</keyword>
<gene>
    <name evidence="1" type="primary">mltF</name>
    <name type="ordered locus">SBO_2586</name>
</gene>
<protein>
    <recommendedName>
        <fullName evidence="1">Membrane-bound lytic murein transglycosylase F</fullName>
        <ecNumber evidence="1">4.2.2.n1</ecNumber>
    </recommendedName>
    <alternativeName>
        <fullName evidence="1">Murein lyase F</fullName>
    </alternativeName>
</protein>